<organism>
    <name type="scientific">Corynebacterium diphtheriae (strain ATCC 700971 / NCTC 13129 / Biotype gravis)</name>
    <dbReference type="NCBI Taxonomy" id="257309"/>
    <lineage>
        <taxon>Bacteria</taxon>
        <taxon>Bacillati</taxon>
        <taxon>Actinomycetota</taxon>
        <taxon>Actinomycetes</taxon>
        <taxon>Mycobacteriales</taxon>
        <taxon>Corynebacteriaceae</taxon>
        <taxon>Corynebacterium</taxon>
    </lineage>
</organism>
<protein>
    <recommendedName>
        <fullName evidence="1">Methionine import ATP-binding protein MetN</fullName>
        <ecNumber evidence="1">7.4.2.11</ecNumber>
    </recommendedName>
</protein>
<keyword id="KW-0029">Amino-acid transport</keyword>
<keyword id="KW-0067">ATP-binding</keyword>
<keyword id="KW-1003">Cell membrane</keyword>
<keyword id="KW-0472">Membrane</keyword>
<keyword id="KW-0547">Nucleotide-binding</keyword>
<keyword id="KW-1185">Reference proteome</keyword>
<keyword id="KW-1278">Translocase</keyword>
<keyword id="KW-0813">Transport</keyword>
<feature type="chain" id="PRO_0000270286" description="Methionine import ATP-binding protein MetN">
    <location>
        <begin position="1"/>
        <end position="340"/>
    </location>
</feature>
<feature type="domain" description="ABC transporter" evidence="1">
    <location>
        <begin position="6"/>
        <end position="245"/>
    </location>
</feature>
<feature type="binding site" evidence="1">
    <location>
        <begin position="42"/>
        <end position="49"/>
    </location>
    <ligand>
        <name>ATP</name>
        <dbReference type="ChEBI" id="CHEBI:30616"/>
    </ligand>
</feature>
<dbReference type="EC" id="7.4.2.11" evidence="1"/>
<dbReference type="EMBL" id="BX248355">
    <property type="protein sequence ID" value="CAE49126.1"/>
    <property type="molecule type" value="Genomic_DNA"/>
</dbReference>
<dbReference type="RefSeq" id="WP_010934418.1">
    <property type="nucleotide sequence ID" value="NC_002935.2"/>
</dbReference>
<dbReference type="SMR" id="Q6NJ07"/>
<dbReference type="STRING" id="257309.DIP0609"/>
<dbReference type="KEGG" id="cdi:DIP0609"/>
<dbReference type="HOGENOM" id="CLU_000604_1_3_11"/>
<dbReference type="Proteomes" id="UP000002198">
    <property type="component" value="Chromosome"/>
</dbReference>
<dbReference type="GO" id="GO:0005886">
    <property type="term" value="C:plasma membrane"/>
    <property type="evidence" value="ECO:0007669"/>
    <property type="project" value="UniProtKB-SubCell"/>
</dbReference>
<dbReference type="GO" id="GO:0033232">
    <property type="term" value="F:ABC-type D-methionine transporter activity"/>
    <property type="evidence" value="ECO:0007669"/>
    <property type="project" value="UniProtKB-EC"/>
</dbReference>
<dbReference type="GO" id="GO:0005524">
    <property type="term" value="F:ATP binding"/>
    <property type="evidence" value="ECO:0007669"/>
    <property type="project" value="UniProtKB-KW"/>
</dbReference>
<dbReference type="GO" id="GO:0016887">
    <property type="term" value="F:ATP hydrolysis activity"/>
    <property type="evidence" value="ECO:0007669"/>
    <property type="project" value="InterPro"/>
</dbReference>
<dbReference type="CDD" id="cd03258">
    <property type="entry name" value="ABC_MetN_methionine_transporter"/>
    <property type="match status" value="1"/>
</dbReference>
<dbReference type="FunFam" id="3.40.50.300:FF:000032">
    <property type="entry name" value="Export ABC transporter ATP-binding protein"/>
    <property type="match status" value="1"/>
</dbReference>
<dbReference type="Gene3D" id="3.30.70.260">
    <property type="match status" value="1"/>
</dbReference>
<dbReference type="Gene3D" id="3.40.50.300">
    <property type="entry name" value="P-loop containing nucleotide triphosphate hydrolases"/>
    <property type="match status" value="1"/>
</dbReference>
<dbReference type="InterPro" id="IPR003593">
    <property type="entry name" value="AAA+_ATPase"/>
</dbReference>
<dbReference type="InterPro" id="IPR003439">
    <property type="entry name" value="ABC_transporter-like_ATP-bd"/>
</dbReference>
<dbReference type="InterPro" id="IPR017871">
    <property type="entry name" value="ABC_transporter-like_CS"/>
</dbReference>
<dbReference type="InterPro" id="IPR045865">
    <property type="entry name" value="ACT-like_dom_sf"/>
</dbReference>
<dbReference type="InterPro" id="IPR041701">
    <property type="entry name" value="MetN_ABC"/>
</dbReference>
<dbReference type="InterPro" id="IPR050086">
    <property type="entry name" value="MetN_ABC_transporter-like"/>
</dbReference>
<dbReference type="InterPro" id="IPR018449">
    <property type="entry name" value="NIL_domain"/>
</dbReference>
<dbReference type="InterPro" id="IPR027417">
    <property type="entry name" value="P-loop_NTPase"/>
</dbReference>
<dbReference type="PANTHER" id="PTHR43166">
    <property type="entry name" value="AMINO ACID IMPORT ATP-BINDING PROTEIN"/>
    <property type="match status" value="1"/>
</dbReference>
<dbReference type="PANTHER" id="PTHR43166:SF30">
    <property type="entry name" value="METHIONINE IMPORT ATP-BINDING PROTEIN METN"/>
    <property type="match status" value="1"/>
</dbReference>
<dbReference type="Pfam" id="PF00005">
    <property type="entry name" value="ABC_tran"/>
    <property type="match status" value="1"/>
</dbReference>
<dbReference type="Pfam" id="PF09383">
    <property type="entry name" value="NIL"/>
    <property type="match status" value="1"/>
</dbReference>
<dbReference type="SMART" id="SM00382">
    <property type="entry name" value="AAA"/>
    <property type="match status" value="1"/>
</dbReference>
<dbReference type="SUPFAM" id="SSF55021">
    <property type="entry name" value="ACT-like"/>
    <property type="match status" value="1"/>
</dbReference>
<dbReference type="SUPFAM" id="SSF52540">
    <property type="entry name" value="P-loop containing nucleoside triphosphate hydrolases"/>
    <property type="match status" value="1"/>
</dbReference>
<dbReference type="PROSITE" id="PS00211">
    <property type="entry name" value="ABC_TRANSPORTER_1"/>
    <property type="match status" value="1"/>
</dbReference>
<dbReference type="PROSITE" id="PS50893">
    <property type="entry name" value="ABC_TRANSPORTER_2"/>
    <property type="match status" value="1"/>
</dbReference>
<dbReference type="PROSITE" id="PS51264">
    <property type="entry name" value="METN"/>
    <property type="match status" value="1"/>
</dbReference>
<proteinExistence type="inferred from homology"/>
<name>METN_CORDI</name>
<reference key="1">
    <citation type="journal article" date="2003" name="Nucleic Acids Res.">
        <title>The complete genome sequence and analysis of Corynebacterium diphtheriae NCTC13129.</title>
        <authorList>
            <person name="Cerdeno-Tarraga A.-M."/>
            <person name="Efstratiou A."/>
            <person name="Dover L.G."/>
            <person name="Holden M.T.G."/>
            <person name="Pallen M.J."/>
            <person name="Bentley S.D."/>
            <person name="Besra G.S."/>
            <person name="Churcher C.M."/>
            <person name="James K.D."/>
            <person name="De Zoysa A."/>
            <person name="Chillingworth T."/>
            <person name="Cronin A."/>
            <person name="Dowd L."/>
            <person name="Feltwell T."/>
            <person name="Hamlin N."/>
            <person name="Holroyd S."/>
            <person name="Jagels K."/>
            <person name="Moule S."/>
            <person name="Quail M.A."/>
            <person name="Rabbinowitsch E."/>
            <person name="Rutherford K.M."/>
            <person name="Thomson N.R."/>
            <person name="Unwin L."/>
            <person name="Whitehead S."/>
            <person name="Barrell B.G."/>
            <person name="Parkhill J."/>
        </authorList>
    </citation>
    <scope>NUCLEOTIDE SEQUENCE [LARGE SCALE GENOMIC DNA]</scope>
    <source>
        <strain>ATCC 700971 / NCTC 13129 / Biotype gravis</strain>
    </source>
</reference>
<accession>Q6NJ07</accession>
<evidence type="ECO:0000255" key="1">
    <source>
        <dbReference type="HAMAP-Rule" id="MF_01719"/>
    </source>
</evidence>
<sequence>MNGTRIEFEGITKVFDSGKKNITALDGVTLTVEPGEILGVIGYSGAGKSTLVRMINGLDTPTSGKLLLDGTDIVGMSEKKLRDIRAHIGMIFQQFNLFTSRTAAGNIEYPLKLAGVDKAERKRRVDELLAFVGLSDRGGNYPEELSGGQKQRVGIARALANNPALLLADEATSALDPETTHEVLELLRKVNRELGITIVVITHEMDVIRSIADKVAVMEAGKVVEYGSVYEVFSHPQTNVAKRFVSTSLRNTPDAIESEDLLAHEGRLFTITLSENSGFFTAAAKAKDAGASIGIVHGGITTLQKHSFGKVTVRLNGEKSVIDDFYAYLTTTTDIQEIQR</sequence>
<gene>
    <name evidence="1" type="primary">metN</name>
    <name type="ordered locus">DIP0609</name>
</gene>
<comment type="function">
    <text evidence="1">Part of the ABC transporter complex MetNIQ involved in methionine import. Responsible for energy coupling to the transport system.</text>
</comment>
<comment type="catalytic activity">
    <reaction evidence="1">
        <text>L-methionine(out) + ATP + H2O = L-methionine(in) + ADP + phosphate + H(+)</text>
        <dbReference type="Rhea" id="RHEA:29779"/>
        <dbReference type="ChEBI" id="CHEBI:15377"/>
        <dbReference type="ChEBI" id="CHEBI:15378"/>
        <dbReference type="ChEBI" id="CHEBI:30616"/>
        <dbReference type="ChEBI" id="CHEBI:43474"/>
        <dbReference type="ChEBI" id="CHEBI:57844"/>
        <dbReference type="ChEBI" id="CHEBI:456216"/>
        <dbReference type="EC" id="7.4.2.11"/>
    </reaction>
</comment>
<comment type="catalytic activity">
    <reaction evidence="1">
        <text>D-methionine(out) + ATP + H2O = D-methionine(in) + ADP + phosphate + H(+)</text>
        <dbReference type="Rhea" id="RHEA:29767"/>
        <dbReference type="ChEBI" id="CHEBI:15377"/>
        <dbReference type="ChEBI" id="CHEBI:15378"/>
        <dbReference type="ChEBI" id="CHEBI:30616"/>
        <dbReference type="ChEBI" id="CHEBI:43474"/>
        <dbReference type="ChEBI" id="CHEBI:57932"/>
        <dbReference type="ChEBI" id="CHEBI:456216"/>
        <dbReference type="EC" id="7.4.2.11"/>
    </reaction>
</comment>
<comment type="subunit">
    <text evidence="1">The complex is composed of two ATP-binding proteins (MetN), two transmembrane proteins (MetI) and a solute-binding protein (MetQ).</text>
</comment>
<comment type="subcellular location">
    <subcellularLocation>
        <location evidence="1">Cell membrane</location>
        <topology evidence="1">Peripheral membrane protein</topology>
    </subcellularLocation>
</comment>
<comment type="similarity">
    <text evidence="1">Belongs to the ABC transporter superfamily. Methionine importer (TC 3.A.1.24) family.</text>
</comment>